<protein>
    <recommendedName>
        <fullName evidence="1">tRNA pseudouridine synthase B</fullName>
        <ecNumber evidence="1">5.4.99.25</ecNumber>
    </recommendedName>
    <alternativeName>
        <fullName evidence="1">tRNA pseudouridine(55) synthase</fullName>
        <shortName evidence="1">Psi55 synthase</shortName>
    </alternativeName>
    <alternativeName>
        <fullName evidence="1">tRNA pseudouridylate synthase</fullName>
    </alternativeName>
    <alternativeName>
        <fullName evidence="1">tRNA-uridine isomerase</fullName>
    </alternativeName>
</protein>
<gene>
    <name evidence="1" type="primary">truB</name>
    <name type="ordered locus">RPA0434</name>
</gene>
<comment type="function">
    <text evidence="1">Responsible for synthesis of pseudouridine from uracil-55 in the psi GC loop of transfer RNAs.</text>
</comment>
<comment type="catalytic activity">
    <reaction evidence="1">
        <text>uridine(55) in tRNA = pseudouridine(55) in tRNA</text>
        <dbReference type="Rhea" id="RHEA:42532"/>
        <dbReference type="Rhea" id="RHEA-COMP:10101"/>
        <dbReference type="Rhea" id="RHEA-COMP:10102"/>
        <dbReference type="ChEBI" id="CHEBI:65314"/>
        <dbReference type="ChEBI" id="CHEBI:65315"/>
        <dbReference type="EC" id="5.4.99.25"/>
    </reaction>
</comment>
<comment type="similarity">
    <text evidence="1">Belongs to the pseudouridine synthase TruB family. Type 1 subfamily.</text>
</comment>
<reference key="1">
    <citation type="journal article" date="2004" name="Nat. Biotechnol.">
        <title>Complete genome sequence of the metabolically versatile photosynthetic bacterium Rhodopseudomonas palustris.</title>
        <authorList>
            <person name="Larimer F.W."/>
            <person name="Chain P."/>
            <person name="Hauser L."/>
            <person name="Lamerdin J.E."/>
            <person name="Malfatti S."/>
            <person name="Do L."/>
            <person name="Land M.L."/>
            <person name="Pelletier D.A."/>
            <person name="Beatty J.T."/>
            <person name="Lang A.S."/>
            <person name="Tabita F.R."/>
            <person name="Gibson J.L."/>
            <person name="Hanson T.E."/>
            <person name="Bobst C."/>
            <person name="Torres y Torres J.L."/>
            <person name="Peres C."/>
            <person name="Harrison F.H."/>
            <person name="Gibson J."/>
            <person name="Harwood C.S."/>
        </authorList>
    </citation>
    <scope>NUCLEOTIDE SEQUENCE [LARGE SCALE GENOMIC DNA]</scope>
    <source>
        <strain>ATCC BAA-98 / CGA009</strain>
    </source>
</reference>
<proteinExistence type="inferred from homology"/>
<accession>P60345</accession>
<keyword id="KW-0413">Isomerase</keyword>
<keyword id="KW-0819">tRNA processing</keyword>
<dbReference type="EC" id="5.4.99.25" evidence="1"/>
<dbReference type="EMBL" id="BX572594">
    <property type="protein sequence ID" value="CAE25878.1"/>
    <property type="molecule type" value="Genomic_DNA"/>
</dbReference>
<dbReference type="RefSeq" id="WP_011156002.1">
    <property type="nucleotide sequence ID" value="NZ_CP116810.1"/>
</dbReference>
<dbReference type="SMR" id="P60345"/>
<dbReference type="STRING" id="258594.RPA0434"/>
<dbReference type="GeneID" id="66891449"/>
<dbReference type="eggNOG" id="COG0130">
    <property type="taxonomic scope" value="Bacteria"/>
</dbReference>
<dbReference type="HOGENOM" id="CLU_032087_0_3_5"/>
<dbReference type="PhylomeDB" id="P60345"/>
<dbReference type="GO" id="GO:0003723">
    <property type="term" value="F:RNA binding"/>
    <property type="evidence" value="ECO:0007669"/>
    <property type="project" value="InterPro"/>
</dbReference>
<dbReference type="GO" id="GO:0160148">
    <property type="term" value="F:tRNA pseudouridine(55) synthase activity"/>
    <property type="evidence" value="ECO:0007669"/>
    <property type="project" value="UniProtKB-EC"/>
</dbReference>
<dbReference type="GO" id="GO:1990481">
    <property type="term" value="P:mRNA pseudouridine synthesis"/>
    <property type="evidence" value="ECO:0007669"/>
    <property type="project" value="TreeGrafter"/>
</dbReference>
<dbReference type="GO" id="GO:0031119">
    <property type="term" value="P:tRNA pseudouridine synthesis"/>
    <property type="evidence" value="ECO:0007669"/>
    <property type="project" value="UniProtKB-UniRule"/>
</dbReference>
<dbReference type="CDD" id="cd02573">
    <property type="entry name" value="PseudoU_synth_EcTruB"/>
    <property type="match status" value="1"/>
</dbReference>
<dbReference type="Gene3D" id="3.30.2350.10">
    <property type="entry name" value="Pseudouridine synthase"/>
    <property type="match status" value="1"/>
</dbReference>
<dbReference type="HAMAP" id="MF_01080">
    <property type="entry name" value="TruB_bact"/>
    <property type="match status" value="1"/>
</dbReference>
<dbReference type="InterPro" id="IPR020103">
    <property type="entry name" value="PsdUridine_synth_cat_dom_sf"/>
</dbReference>
<dbReference type="InterPro" id="IPR002501">
    <property type="entry name" value="PsdUridine_synth_N"/>
</dbReference>
<dbReference type="InterPro" id="IPR014780">
    <property type="entry name" value="tRNA_psdUridine_synth_TruB"/>
</dbReference>
<dbReference type="InterPro" id="IPR032819">
    <property type="entry name" value="TruB_C"/>
</dbReference>
<dbReference type="NCBIfam" id="TIGR00431">
    <property type="entry name" value="TruB"/>
    <property type="match status" value="1"/>
</dbReference>
<dbReference type="PANTHER" id="PTHR13767:SF2">
    <property type="entry name" value="PSEUDOURIDYLATE SYNTHASE TRUB1"/>
    <property type="match status" value="1"/>
</dbReference>
<dbReference type="PANTHER" id="PTHR13767">
    <property type="entry name" value="TRNA-PSEUDOURIDINE SYNTHASE"/>
    <property type="match status" value="1"/>
</dbReference>
<dbReference type="Pfam" id="PF16198">
    <property type="entry name" value="TruB_C_2"/>
    <property type="match status" value="1"/>
</dbReference>
<dbReference type="Pfam" id="PF01509">
    <property type="entry name" value="TruB_N"/>
    <property type="match status" value="1"/>
</dbReference>
<dbReference type="SUPFAM" id="SSF55120">
    <property type="entry name" value="Pseudouridine synthase"/>
    <property type="match status" value="1"/>
</dbReference>
<feature type="chain" id="PRO_0000121893" description="tRNA pseudouridine synthase B">
    <location>
        <begin position="1"/>
        <end position="366"/>
    </location>
</feature>
<feature type="region of interest" description="Disordered" evidence="2">
    <location>
        <begin position="1"/>
        <end position="55"/>
    </location>
</feature>
<feature type="active site" description="Nucleophile" evidence="1">
    <location>
        <position position="92"/>
    </location>
</feature>
<organism>
    <name type="scientific">Rhodopseudomonas palustris (strain ATCC BAA-98 / CGA009)</name>
    <dbReference type="NCBI Taxonomy" id="258594"/>
    <lineage>
        <taxon>Bacteria</taxon>
        <taxon>Pseudomonadati</taxon>
        <taxon>Pseudomonadota</taxon>
        <taxon>Alphaproteobacteria</taxon>
        <taxon>Hyphomicrobiales</taxon>
        <taxon>Nitrobacteraceae</taxon>
        <taxon>Rhodopseudomonas</taxon>
    </lineage>
</organism>
<evidence type="ECO:0000255" key="1">
    <source>
        <dbReference type="HAMAP-Rule" id="MF_01080"/>
    </source>
</evidence>
<evidence type="ECO:0000256" key="2">
    <source>
        <dbReference type="SAM" id="MobiDB-lite"/>
    </source>
</evidence>
<name>TRUB_RHOPA</name>
<sequence>MTVTTPDALLAPHDVQHAGADESAAQIRKPRDNNDPRNANRGGGNGKPRRDKRDVHGWVVLDKPIGMTSTQAVAVLKRLFSAKRAGHAGTLDPLASGGLPIAMGEATKTVPFVMDGRKRYRFTVAWGEERDTDDTEGRAVATSPDRPTAEAIRALLPRFTGVIEQVPPQYSAVKIQGERAYDLARDGEVVPLVPRPVEIHELTLVEHGDDGRSVFEAECGKGTYVRALARDMGRLLGCYGHICALRRTVVGPFDESDMIPLEELQALCDRAASGEGSLADALLPVETALDDIPALAVTRADAARLHRGQAVLLRGRDAPHCSGTVYVTVAGRLLALAEVGNGELIPKRVFNLTGLTASSAVRKESI</sequence>